<name>PDXT_RHOJR</name>
<gene>
    <name evidence="1" type="primary">pdxT</name>
    <name type="ordered locus">RHA1_ro06888</name>
</gene>
<dbReference type="EC" id="4.3.3.6" evidence="1"/>
<dbReference type="EC" id="3.5.1.2" evidence="1"/>
<dbReference type="EMBL" id="CP000431">
    <property type="protein sequence ID" value="ABG98654.1"/>
    <property type="molecule type" value="Genomic_DNA"/>
</dbReference>
<dbReference type="RefSeq" id="WP_009480131.1">
    <property type="nucleotide sequence ID" value="NC_008268.1"/>
</dbReference>
<dbReference type="SMR" id="Q0S1D2"/>
<dbReference type="MEROPS" id="C26.A32"/>
<dbReference type="KEGG" id="rha:RHA1_ro06888"/>
<dbReference type="eggNOG" id="COG0311">
    <property type="taxonomic scope" value="Bacteria"/>
</dbReference>
<dbReference type="HOGENOM" id="CLU_069674_2_0_11"/>
<dbReference type="OrthoDB" id="9810320at2"/>
<dbReference type="UniPathway" id="UPA00245"/>
<dbReference type="Proteomes" id="UP000008710">
    <property type="component" value="Chromosome"/>
</dbReference>
<dbReference type="GO" id="GO:0005829">
    <property type="term" value="C:cytosol"/>
    <property type="evidence" value="ECO:0007669"/>
    <property type="project" value="TreeGrafter"/>
</dbReference>
<dbReference type="GO" id="GO:1903600">
    <property type="term" value="C:glutaminase complex"/>
    <property type="evidence" value="ECO:0007669"/>
    <property type="project" value="TreeGrafter"/>
</dbReference>
<dbReference type="GO" id="GO:0004359">
    <property type="term" value="F:glutaminase activity"/>
    <property type="evidence" value="ECO:0007669"/>
    <property type="project" value="UniProtKB-UniRule"/>
</dbReference>
<dbReference type="GO" id="GO:0036381">
    <property type="term" value="F:pyridoxal 5'-phosphate synthase (glutamine hydrolysing) activity"/>
    <property type="evidence" value="ECO:0007669"/>
    <property type="project" value="UniProtKB-UniRule"/>
</dbReference>
<dbReference type="GO" id="GO:0006543">
    <property type="term" value="P:glutamine catabolic process"/>
    <property type="evidence" value="ECO:0007669"/>
    <property type="project" value="UniProtKB-UniRule"/>
</dbReference>
<dbReference type="GO" id="GO:0042823">
    <property type="term" value="P:pyridoxal phosphate biosynthetic process"/>
    <property type="evidence" value="ECO:0007669"/>
    <property type="project" value="UniProtKB-UniRule"/>
</dbReference>
<dbReference type="GO" id="GO:0008614">
    <property type="term" value="P:pyridoxine metabolic process"/>
    <property type="evidence" value="ECO:0007669"/>
    <property type="project" value="TreeGrafter"/>
</dbReference>
<dbReference type="CDD" id="cd01749">
    <property type="entry name" value="GATase1_PB"/>
    <property type="match status" value="1"/>
</dbReference>
<dbReference type="FunFam" id="3.40.50.880:FF:000010">
    <property type="entry name" value="uncharacterized protein LOC100176842 isoform X2"/>
    <property type="match status" value="1"/>
</dbReference>
<dbReference type="Gene3D" id="3.40.50.880">
    <property type="match status" value="1"/>
</dbReference>
<dbReference type="HAMAP" id="MF_01615">
    <property type="entry name" value="PdxT"/>
    <property type="match status" value="1"/>
</dbReference>
<dbReference type="InterPro" id="IPR029062">
    <property type="entry name" value="Class_I_gatase-like"/>
</dbReference>
<dbReference type="InterPro" id="IPR002161">
    <property type="entry name" value="PdxT/SNO"/>
</dbReference>
<dbReference type="InterPro" id="IPR021196">
    <property type="entry name" value="PdxT/SNO_CS"/>
</dbReference>
<dbReference type="NCBIfam" id="TIGR03800">
    <property type="entry name" value="PLP_synth_Pdx2"/>
    <property type="match status" value="1"/>
</dbReference>
<dbReference type="PANTHER" id="PTHR31559">
    <property type="entry name" value="PYRIDOXAL 5'-PHOSPHATE SYNTHASE SUBUNIT SNO"/>
    <property type="match status" value="1"/>
</dbReference>
<dbReference type="PANTHER" id="PTHR31559:SF0">
    <property type="entry name" value="PYRIDOXAL 5'-PHOSPHATE SYNTHASE SUBUNIT SNO1-RELATED"/>
    <property type="match status" value="1"/>
</dbReference>
<dbReference type="Pfam" id="PF01174">
    <property type="entry name" value="SNO"/>
    <property type="match status" value="1"/>
</dbReference>
<dbReference type="PIRSF" id="PIRSF005639">
    <property type="entry name" value="Glut_amidoT_SNO"/>
    <property type="match status" value="1"/>
</dbReference>
<dbReference type="SUPFAM" id="SSF52317">
    <property type="entry name" value="Class I glutamine amidotransferase-like"/>
    <property type="match status" value="1"/>
</dbReference>
<dbReference type="PROSITE" id="PS01236">
    <property type="entry name" value="PDXT_SNO_1"/>
    <property type="match status" value="1"/>
</dbReference>
<dbReference type="PROSITE" id="PS51130">
    <property type="entry name" value="PDXT_SNO_2"/>
    <property type="match status" value="1"/>
</dbReference>
<comment type="function">
    <text evidence="1">Catalyzes the hydrolysis of glutamine to glutamate and ammonia as part of the biosynthesis of pyridoxal 5'-phosphate. The resulting ammonia molecule is channeled to the active site of PdxS.</text>
</comment>
<comment type="catalytic activity">
    <reaction evidence="1">
        <text>aldehydo-D-ribose 5-phosphate + D-glyceraldehyde 3-phosphate + L-glutamine = pyridoxal 5'-phosphate + L-glutamate + phosphate + 3 H2O + H(+)</text>
        <dbReference type="Rhea" id="RHEA:31507"/>
        <dbReference type="ChEBI" id="CHEBI:15377"/>
        <dbReference type="ChEBI" id="CHEBI:15378"/>
        <dbReference type="ChEBI" id="CHEBI:29985"/>
        <dbReference type="ChEBI" id="CHEBI:43474"/>
        <dbReference type="ChEBI" id="CHEBI:58273"/>
        <dbReference type="ChEBI" id="CHEBI:58359"/>
        <dbReference type="ChEBI" id="CHEBI:59776"/>
        <dbReference type="ChEBI" id="CHEBI:597326"/>
        <dbReference type="EC" id="4.3.3.6"/>
    </reaction>
</comment>
<comment type="catalytic activity">
    <reaction evidence="1">
        <text>L-glutamine + H2O = L-glutamate + NH4(+)</text>
        <dbReference type="Rhea" id="RHEA:15889"/>
        <dbReference type="ChEBI" id="CHEBI:15377"/>
        <dbReference type="ChEBI" id="CHEBI:28938"/>
        <dbReference type="ChEBI" id="CHEBI:29985"/>
        <dbReference type="ChEBI" id="CHEBI:58359"/>
        <dbReference type="EC" id="3.5.1.2"/>
    </reaction>
</comment>
<comment type="pathway">
    <text evidence="1">Cofactor biosynthesis; pyridoxal 5'-phosphate biosynthesis.</text>
</comment>
<comment type="subunit">
    <text evidence="1">In the presence of PdxS, forms a dodecamer of heterodimers. Only shows activity in the heterodimer.</text>
</comment>
<comment type="similarity">
    <text evidence="1">Belongs to the glutaminase PdxT/SNO family.</text>
</comment>
<proteinExistence type="inferred from homology"/>
<sequence length="202" mass="21772">MTRPLVGVLALQGDVREHLAALNDSGADAVGIRRPEELEKIDGLVIPGGESTTMSKLLQIFELLEPLKARLRDGLPAYGSCAGMILLASEILDTRPDAQHLGAIDMTVRRNAFGRQVDSFESDLEFEGIVGDPMRAVFIRAPWVERVGDDVQVLARVPESGGAAAGRIVAVRQGAVVATSFHPEVTGDRRVHELFVDIVRGV</sequence>
<keyword id="KW-0315">Glutamine amidotransferase</keyword>
<keyword id="KW-0378">Hydrolase</keyword>
<keyword id="KW-0456">Lyase</keyword>
<keyword id="KW-0663">Pyridoxal phosphate</keyword>
<organism>
    <name type="scientific">Rhodococcus jostii (strain RHA1)</name>
    <dbReference type="NCBI Taxonomy" id="101510"/>
    <lineage>
        <taxon>Bacteria</taxon>
        <taxon>Bacillati</taxon>
        <taxon>Actinomycetota</taxon>
        <taxon>Actinomycetes</taxon>
        <taxon>Mycobacteriales</taxon>
        <taxon>Nocardiaceae</taxon>
        <taxon>Rhodococcus</taxon>
    </lineage>
</organism>
<feature type="chain" id="PRO_0000255835" description="Pyridoxal 5'-phosphate synthase subunit PdxT">
    <location>
        <begin position="1"/>
        <end position="202"/>
    </location>
</feature>
<feature type="active site" description="Nucleophile" evidence="1">
    <location>
        <position position="81"/>
    </location>
</feature>
<feature type="active site" description="Charge relay system" evidence="1">
    <location>
        <position position="182"/>
    </location>
</feature>
<feature type="active site" description="Charge relay system" evidence="1">
    <location>
        <position position="184"/>
    </location>
</feature>
<feature type="binding site" evidence="1">
    <location>
        <begin position="49"/>
        <end position="51"/>
    </location>
    <ligand>
        <name>L-glutamine</name>
        <dbReference type="ChEBI" id="CHEBI:58359"/>
    </ligand>
</feature>
<feature type="binding site" evidence="1">
    <location>
        <position position="110"/>
    </location>
    <ligand>
        <name>L-glutamine</name>
        <dbReference type="ChEBI" id="CHEBI:58359"/>
    </ligand>
</feature>
<feature type="binding site" evidence="1">
    <location>
        <begin position="139"/>
        <end position="140"/>
    </location>
    <ligand>
        <name>L-glutamine</name>
        <dbReference type="ChEBI" id="CHEBI:58359"/>
    </ligand>
</feature>
<accession>Q0S1D2</accession>
<reference key="1">
    <citation type="journal article" date="2006" name="Proc. Natl. Acad. Sci. U.S.A.">
        <title>The complete genome of Rhodococcus sp. RHA1 provides insights into a catabolic powerhouse.</title>
        <authorList>
            <person name="McLeod M.P."/>
            <person name="Warren R.L."/>
            <person name="Hsiao W.W.L."/>
            <person name="Araki N."/>
            <person name="Myhre M."/>
            <person name="Fernandes C."/>
            <person name="Miyazawa D."/>
            <person name="Wong W."/>
            <person name="Lillquist A.L."/>
            <person name="Wang D."/>
            <person name="Dosanjh M."/>
            <person name="Hara H."/>
            <person name="Petrescu A."/>
            <person name="Morin R.D."/>
            <person name="Yang G."/>
            <person name="Stott J.M."/>
            <person name="Schein J.E."/>
            <person name="Shin H."/>
            <person name="Smailus D."/>
            <person name="Siddiqui A.S."/>
            <person name="Marra M.A."/>
            <person name="Jones S.J.M."/>
            <person name="Holt R."/>
            <person name="Brinkman F.S.L."/>
            <person name="Miyauchi K."/>
            <person name="Fukuda M."/>
            <person name="Davies J.E."/>
            <person name="Mohn W.W."/>
            <person name="Eltis L.D."/>
        </authorList>
    </citation>
    <scope>NUCLEOTIDE SEQUENCE [LARGE SCALE GENOMIC DNA]</scope>
    <source>
        <strain>RHA1</strain>
    </source>
</reference>
<protein>
    <recommendedName>
        <fullName evidence="1">Pyridoxal 5'-phosphate synthase subunit PdxT</fullName>
        <ecNumber evidence="1">4.3.3.6</ecNumber>
    </recommendedName>
    <alternativeName>
        <fullName evidence="1">Pdx2</fullName>
    </alternativeName>
    <alternativeName>
        <fullName evidence="1">Pyridoxal 5'-phosphate synthase glutaminase subunit</fullName>
        <ecNumber evidence="1">3.5.1.2</ecNumber>
    </alternativeName>
</protein>
<evidence type="ECO:0000255" key="1">
    <source>
        <dbReference type="HAMAP-Rule" id="MF_01615"/>
    </source>
</evidence>